<gene>
    <name evidence="1" type="primary">rpsG</name>
    <name type="ordered locus">Arth_2981</name>
</gene>
<sequence length="156" mass="17134">MPRKGPAPKRPLVLDPVYGSPLVTQLINKVLVDGKKSTAERIVYGALEGARAKSGGDPVAALKKAMENVKPSLEVRSRRVGGATYQVPVEVKPGRSTALALRWLVGYSKARREKTMTERLQNEILDASNGLGAAVKRREDTHKMAESNKAFAHYRW</sequence>
<evidence type="ECO:0000255" key="1">
    <source>
        <dbReference type="HAMAP-Rule" id="MF_00480"/>
    </source>
</evidence>
<evidence type="ECO:0000305" key="2"/>
<accession>A0JZ90</accession>
<keyword id="KW-1185">Reference proteome</keyword>
<keyword id="KW-0687">Ribonucleoprotein</keyword>
<keyword id="KW-0689">Ribosomal protein</keyword>
<keyword id="KW-0694">RNA-binding</keyword>
<keyword id="KW-0699">rRNA-binding</keyword>
<keyword id="KW-0820">tRNA-binding</keyword>
<reference key="1">
    <citation type="journal article" date="2013" name="Stand. Genomic Sci.">
        <title>Complete genome sequence of Arthrobacter sp. strain FB24.</title>
        <authorList>
            <person name="Nakatsu C.H."/>
            <person name="Barabote R."/>
            <person name="Thompson S."/>
            <person name="Bruce D."/>
            <person name="Detter C."/>
            <person name="Brettin T."/>
            <person name="Han C."/>
            <person name="Beasley F."/>
            <person name="Chen W."/>
            <person name="Konopka A."/>
            <person name="Xie G."/>
        </authorList>
    </citation>
    <scope>NUCLEOTIDE SEQUENCE [LARGE SCALE GENOMIC DNA]</scope>
    <source>
        <strain>FB24</strain>
    </source>
</reference>
<dbReference type="EMBL" id="CP000454">
    <property type="protein sequence ID" value="ABK04360.1"/>
    <property type="molecule type" value="Genomic_DNA"/>
</dbReference>
<dbReference type="RefSeq" id="WP_011692813.1">
    <property type="nucleotide sequence ID" value="NC_008541.1"/>
</dbReference>
<dbReference type="SMR" id="A0JZ90"/>
<dbReference type="STRING" id="290399.Arth_2981"/>
<dbReference type="KEGG" id="art:Arth_2981"/>
<dbReference type="eggNOG" id="COG0049">
    <property type="taxonomic scope" value="Bacteria"/>
</dbReference>
<dbReference type="HOGENOM" id="CLU_072226_1_1_11"/>
<dbReference type="OrthoDB" id="9807653at2"/>
<dbReference type="Proteomes" id="UP000000754">
    <property type="component" value="Chromosome"/>
</dbReference>
<dbReference type="GO" id="GO:0015935">
    <property type="term" value="C:small ribosomal subunit"/>
    <property type="evidence" value="ECO:0007669"/>
    <property type="project" value="InterPro"/>
</dbReference>
<dbReference type="GO" id="GO:0019843">
    <property type="term" value="F:rRNA binding"/>
    <property type="evidence" value="ECO:0007669"/>
    <property type="project" value="UniProtKB-UniRule"/>
</dbReference>
<dbReference type="GO" id="GO:0003735">
    <property type="term" value="F:structural constituent of ribosome"/>
    <property type="evidence" value="ECO:0007669"/>
    <property type="project" value="InterPro"/>
</dbReference>
<dbReference type="GO" id="GO:0000049">
    <property type="term" value="F:tRNA binding"/>
    <property type="evidence" value="ECO:0007669"/>
    <property type="project" value="UniProtKB-UniRule"/>
</dbReference>
<dbReference type="GO" id="GO:0006412">
    <property type="term" value="P:translation"/>
    <property type="evidence" value="ECO:0007669"/>
    <property type="project" value="UniProtKB-UniRule"/>
</dbReference>
<dbReference type="CDD" id="cd14869">
    <property type="entry name" value="uS7_Bacteria"/>
    <property type="match status" value="1"/>
</dbReference>
<dbReference type="FunFam" id="1.10.455.10:FF:000001">
    <property type="entry name" value="30S ribosomal protein S7"/>
    <property type="match status" value="1"/>
</dbReference>
<dbReference type="Gene3D" id="1.10.455.10">
    <property type="entry name" value="Ribosomal protein S7 domain"/>
    <property type="match status" value="1"/>
</dbReference>
<dbReference type="HAMAP" id="MF_00480_B">
    <property type="entry name" value="Ribosomal_uS7_B"/>
    <property type="match status" value="1"/>
</dbReference>
<dbReference type="InterPro" id="IPR000235">
    <property type="entry name" value="Ribosomal_uS7"/>
</dbReference>
<dbReference type="InterPro" id="IPR005717">
    <property type="entry name" value="Ribosomal_uS7_bac/org-type"/>
</dbReference>
<dbReference type="InterPro" id="IPR020606">
    <property type="entry name" value="Ribosomal_uS7_CS"/>
</dbReference>
<dbReference type="InterPro" id="IPR023798">
    <property type="entry name" value="Ribosomal_uS7_dom"/>
</dbReference>
<dbReference type="InterPro" id="IPR036823">
    <property type="entry name" value="Ribosomal_uS7_dom_sf"/>
</dbReference>
<dbReference type="NCBIfam" id="TIGR01029">
    <property type="entry name" value="rpsG_bact"/>
    <property type="match status" value="1"/>
</dbReference>
<dbReference type="PANTHER" id="PTHR11205">
    <property type="entry name" value="RIBOSOMAL PROTEIN S7"/>
    <property type="match status" value="1"/>
</dbReference>
<dbReference type="Pfam" id="PF00177">
    <property type="entry name" value="Ribosomal_S7"/>
    <property type="match status" value="1"/>
</dbReference>
<dbReference type="PIRSF" id="PIRSF002122">
    <property type="entry name" value="RPS7p_RPS7a_RPS5e_RPS7o"/>
    <property type="match status" value="1"/>
</dbReference>
<dbReference type="SUPFAM" id="SSF47973">
    <property type="entry name" value="Ribosomal protein S7"/>
    <property type="match status" value="1"/>
</dbReference>
<dbReference type="PROSITE" id="PS00052">
    <property type="entry name" value="RIBOSOMAL_S7"/>
    <property type="match status" value="1"/>
</dbReference>
<name>RS7_ARTS2</name>
<protein>
    <recommendedName>
        <fullName evidence="1">Small ribosomal subunit protein uS7</fullName>
    </recommendedName>
    <alternativeName>
        <fullName evidence="2">30S ribosomal protein S7</fullName>
    </alternativeName>
</protein>
<organism>
    <name type="scientific">Arthrobacter sp. (strain FB24)</name>
    <dbReference type="NCBI Taxonomy" id="290399"/>
    <lineage>
        <taxon>Bacteria</taxon>
        <taxon>Bacillati</taxon>
        <taxon>Actinomycetota</taxon>
        <taxon>Actinomycetes</taxon>
        <taxon>Micrococcales</taxon>
        <taxon>Micrococcaceae</taxon>
        <taxon>Arthrobacter</taxon>
    </lineage>
</organism>
<comment type="function">
    <text evidence="1">One of the primary rRNA binding proteins, it binds directly to 16S rRNA where it nucleates assembly of the head domain of the 30S subunit. Is located at the subunit interface close to the decoding center, probably blocks exit of the E-site tRNA.</text>
</comment>
<comment type="subunit">
    <text evidence="1">Part of the 30S ribosomal subunit. Contacts proteins S9 and S11.</text>
</comment>
<comment type="similarity">
    <text evidence="1">Belongs to the universal ribosomal protein uS7 family.</text>
</comment>
<proteinExistence type="inferred from homology"/>
<feature type="chain" id="PRO_1000014144" description="Small ribosomal subunit protein uS7">
    <location>
        <begin position="1"/>
        <end position="156"/>
    </location>
</feature>